<organism>
    <name type="scientific">Saccharopolyspora erythraea (strain ATCC 11635 / DSM 40517 / JCM 4748 / NBRC 13426 / NCIMB 8594 / NRRL 2338)</name>
    <dbReference type="NCBI Taxonomy" id="405948"/>
    <lineage>
        <taxon>Bacteria</taxon>
        <taxon>Bacillati</taxon>
        <taxon>Actinomycetota</taxon>
        <taxon>Actinomycetes</taxon>
        <taxon>Pseudonocardiales</taxon>
        <taxon>Pseudonocardiaceae</taxon>
        <taxon>Saccharopolyspora</taxon>
    </lineage>
</organism>
<dbReference type="EMBL" id="AM420293">
    <property type="protein sequence ID" value="CAM00434.1"/>
    <property type="molecule type" value="Genomic_DNA"/>
</dbReference>
<dbReference type="SMR" id="A4F8Q9"/>
<dbReference type="STRING" id="405948.SACE_1102"/>
<dbReference type="KEGG" id="sen:SACE_1102"/>
<dbReference type="eggNOG" id="COG1615">
    <property type="taxonomic scope" value="Bacteria"/>
</dbReference>
<dbReference type="HOGENOM" id="CLU_007733_1_0_11"/>
<dbReference type="Proteomes" id="UP000006728">
    <property type="component" value="Chromosome"/>
</dbReference>
<dbReference type="GO" id="GO:0005576">
    <property type="term" value="C:extracellular region"/>
    <property type="evidence" value="ECO:0007669"/>
    <property type="project" value="TreeGrafter"/>
</dbReference>
<dbReference type="GO" id="GO:0005886">
    <property type="term" value="C:plasma membrane"/>
    <property type="evidence" value="ECO:0007669"/>
    <property type="project" value="UniProtKB-SubCell"/>
</dbReference>
<dbReference type="HAMAP" id="MF_01600">
    <property type="entry name" value="UPF0182"/>
    <property type="match status" value="1"/>
</dbReference>
<dbReference type="InterPro" id="IPR005372">
    <property type="entry name" value="UPF0182"/>
</dbReference>
<dbReference type="NCBIfam" id="NF000825">
    <property type="entry name" value="PRK00068.1"/>
    <property type="match status" value="1"/>
</dbReference>
<dbReference type="NCBIfam" id="NF009097">
    <property type="entry name" value="PRK12438.1"/>
    <property type="match status" value="1"/>
</dbReference>
<dbReference type="PANTHER" id="PTHR39344">
    <property type="entry name" value="UPF0182 PROTEIN SLL1060"/>
    <property type="match status" value="1"/>
</dbReference>
<dbReference type="PANTHER" id="PTHR39344:SF1">
    <property type="entry name" value="UPF0182 PROTEIN SLL1060"/>
    <property type="match status" value="1"/>
</dbReference>
<dbReference type="Pfam" id="PF03699">
    <property type="entry name" value="UPF0182"/>
    <property type="match status" value="1"/>
</dbReference>
<keyword id="KW-1003">Cell membrane</keyword>
<keyword id="KW-0472">Membrane</keyword>
<keyword id="KW-1185">Reference proteome</keyword>
<keyword id="KW-0812">Transmembrane</keyword>
<keyword id="KW-1133">Transmembrane helix</keyword>
<proteinExistence type="inferred from homology"/>
<feature type="chain" id="PRO_0000291293" description="UPF0182 protein SACE_1102">
    <location>
        <begin position="1"/>
        <end position="962"/>
    </location>
</feature>
<feature type="transmembrane region" description="Helical" evidence="1">
    <location>
        <begin position="10"/>
        <end position="30"/>
    </location>
</feature>
<feature type="transmembrane region" description="Helical" evidence="1">
    <location>
        <begin position="55"/>
        <end position="75"/>
    </location>
</feature>
<feature type="transmembrane region" description="Helical" evidence="1">
    <location>
        <begin position="106"/>
        <end position="126"/>
    </location>
</feature>
<feature type="transmembrane region" description="Helical" evidence="1">
    <location>
        <begin position="168"/>
        <end position="188"/>
    </location>
</feature>
<feature type="transmembrane region" description="Helical" evidence="1">
    <location>
        <begin position="203"/>
        <end position="223"/>
    </location>
</feature>
<feature type="transmembrane region" description="Helical" evidence="1">
    <location>
        <begin position="250"/>
        <end position="270"/>
    </location>
</feature>
<feature type="transmembrane region" description="Helical" evidence="1">
    <location>
        <begin position="279"/>
        <end position="299"/>
    </location>
</feature>
<feature type="region of interest" description="Disordered" evidence="2">
    <location>
        <begin position="707"/>
        <end position="730"/>
    </location>
</feature>
<feature type="region of interest" description="Disordered" evidence="2">
    <location>
        <begin position="876"/>
        <end position="916"/>
    </location>
</feature>
<feature type="compositionally biased region" description="Pro residues" evidence="2">
    <location>
        <begin position="899"/>
        <end position="910"/>
    </location>
</feature>
<protein>
    <recommendedName>
        <fullName evidence="1">UPF0182 protein SACE_1102</fullName>
    </recommendedName>
</protein>
<sequence>MPKLSRRSRILLILGGVVLIALIAGSRLLGTYVDWLWFGEVGRRQVFATQVFSRLGLGVAAGAFVGVVLLLNLWIAYRSRPVFVPVSGPDDPLARYRTVATERSRLFGWGIPIVIAVIAGLTAQSDWQTLQLFLHSVPFGQVDPEFGNDISFYTFQLPFWRFLLSWSFVAITVGFIGALVTHYIFGGIRLAGRSGQVAAPARIQLSVLAGLFVLLKAVDYFLDRYDLLLSDRNSLFTGATYTDLNALMPVKLILMIIAVFCALAFFAAIFLRNLQIPAIATVLLVLSSILVGSVWPALLEQFSVRPNANQREALSIERNLAATRSAFGIGADKVTIKDYPGKTALTPGEVADDEGTIPNIRLLDPNVLSDTFTQLTQQYNFYGFNEKLDVDRYREPNGQLRDYLVALREIDTDGLAQNQQSWINRHMVYTHGNGFIAAPADRVDSTFQEGATQGGYPVFQISDVANGGKGAIPVDNPRVYYGELLNQNDYAIVGGNPGEAPREYDTDRSAYTYAGKGGVPLGSFFNRLVFAGYYGERNFLFNTAIGSDSKIMYERNPRDRVQKVAPWLKLDGDPYPAVVDGKVKWIIDGYTTLDNYPYSQQTQFGQATTDTLTGVERQPNQPINYIRNSVKATVDAYDGSVDLYAVDEKDPVLKAWQGVFPGVVKPAKEISPQLQEHFRYPEDLFKVQRQLLTQYHVTNPGDFFSNRTFWEVPPDPTSSGQGGSNQGNQQPPYYVLAQIEGQNQPTFQLTSALTALKRQNLAAWVSASSDPRDYGKLTVLRLPTDTQTPGPNQVQNQMESTPEVTENRTLFNNPQVTAIFGNLLTLPVAGGLLYVEPIYIQRNETESYPQLARVLVSFGGKVGFSETLAGALEQVFGPGAGQTAGDEPPPGQDSNQPPGQQPPTQQPPAGSPEMTKAVADIRTALESVRSAQQSGNFGRLGAAYQQLDEALKRFEQLGGTGG</sequence>
<reference key="1">
    <citation type="journal article" date="2007" name="Nat. Biotechnol.">
        <title>Complete genome sequence of the erythromycin-producing bacterium Saccharopolyspora erythraea NRRL23338.</title>
        <authorList>
            <person name="Oliynyk M."/>
            <person name="Samborskyy M."/>
            <person name="Lester J.B."/>
            <person name="Mironenko T."/>
            <person name="Scott N."/>
            <person name="Dickens S."/>
            <person name="Haydock S.F."/>
            <person name="Leadlay P.F."/>
        </authorList>
    </citation>
    <scope>NUCLEOTIDE SEQUENCE [LARGE SCALE GENOMIC DNA]</scope>
    <source>
        <strain>ATCC 11635 / DSM 40517 / JCM 4748 / NBRC 13426 / NCIMB 8594 / NRRL 2338</strain>
    </source>
</reference>
<comment type="subcellular location">
    <subcellularLocation>
        <location evidence="1">Cell membrane</location>
        <topology evidence="1">Multi-pass membrane protein</topology>
    </subcellularLocation>
</comment>
<comment type="similarity">
    <text evidence="1">Belongs to the UPF0182 family.</text>
</comment>
<evidence type="ECO:0000255" key="1">
    <source>
        <dbReference type="HAMAP-Rule" id="MF_01600"/>
    </source>
</evidence>
<evidence type="ECO:0000256" key="2">
    <source>
        <dbReference type="SAM" id="MobiDB-lite"/>
    </source>
</evidence>
<gene>
    <name type="ordered locus">SACE_1102</name>
</gene>
<name>Y1102_SACEN</name>
<accession>A4F8Q9</accession>